<sequence length="361" mass="38884">MERITVTLGERSYPITIAAGLFNDPASFWPLTRGDSAMLVTNDRLAPLYLESLCERLTQAGVKVDRVVLPDGEQNKSLTVLDQVFTALLAKSHGRDTTLIALGGGVIGDLAGFAAASYQRGVRFIQAPTTLLSQVDSSVGGKTAVNHSLGKNMIGAFYQPASVVIDLDCLNTLPRRELSSGLAEVIKYGIILDAAFFAWLEDNLEALLALEPQALAYCIRRCCELKADVVAADEREQGQRALLNLGHTYGHAIETHMGYGNWLHGEAVAAGMMMAVRAARRLGQFSDADAERVSALLQRAGLTMSGPAEMAPEDYLPHMMRDKKVIAGRLRLVLPVTLGNAEVRTGVADDMVVASIKDCQA</sequence>
<accession>Q2NQJ2</accession>
<comment type="function">
    <text evidence="1">Catalyzes the conversion of 3-deoxy-D-arabino-heptulosonate 7-phosphate (DAHP) to dehydroquinate (DHQ).</text>
</comment>
<comment type="catalytic activity">
    <reaction evidence="1">
        <text>7-phospho-2-dehydro-3-deoxy-D-arabino-heptonate = 3-dehydroquinate + phosphate</text>
        <dbReference type="Rhea" id="RHEA:21968"/>
        <dbReference type="ChEBI" id="CHEBI:32364"/>
        <dbReference type="ChEBI" id="CHEBI:43474"/>
        <dbReference type="ChEBI" id="CHEBI:58394"/>
        <dbReference type="EC" id="4.2.3.4"/>
    </reaction>
</comment>
<comment type="cofactor">
    <cofactor evidence="1">
        <name>Co(2+)</name>
        <dbReference type="ChEBI" id="CHEBI:48828"/>
    </cofactor>
    <cofactor evidence="1">
        <name>Zn(2+)</name>
        <dbReference type="ChEBI" id="CHEBI:29105"/>
    </cofactor>
    <text evidence="1">Binds 1 divalent metal cation per subunit. Can use either Co(2+) or Zn(2+).</text>
</comment>
<comment type="cofactor">
    <cofactor evidence="1">
        <name>NAD(+)</name>
        <dbReference type="ChEBI" id="CHEBI:57540"/>
    </cofactor>
</comment>
<comment type="pathway">
    <text evidence="1">Metabolic intermediate biosynthesis; chorismate biosynthesis; chorismate from D-erythrose 4-phosphate and phosphoenolpyruvate: step 2/7.</text>
</comment>
<comment type="subcellular location">
    <subcellularLocation>
        <location evidence="1">Cytoplasm</location>
    </subcellularLocation>
</comment>
<comment type="similarity">
    <text evidence="1">Belongs to the sugar phosphate cyclases superfamily. Dehydroquinate synthase family.</text>
</comment>
<proteinExistence type="inferred from homology"/>
<dbReference type="EC" id="4.2.3.4" evidence="1"/>
<dbReference type="EMBL" id="AP008232">
    <property type="protein sequence ID" value="BAE75583.1"/>
    <property type="molecule type" value="Genomic_DNA"/>
</dbReference>
<dbReference type="RefSeq" id="WP_011412116.1">
    <property type="nucleotide sequence ID" value="NC_007712.1"/>
</dbReference>
<dbReference type="SMR" id="Q2NQJ2"/>
<dbReference type="STRING" id="343509.SG2308"/>
<dbReference type="KEGG" id="sgl:SG2308"/>
<dbReference type="eggNOG" id="COG0337">
    <property type="taxonomic scope" value="Bacteria"/>
</dbReference>
<dbReference type="HOGENOM" id="CLU_001201_0_2_6"/>
<dbReference type="OrthoDB" id="9806583at2"/>
<dbReference type="UniPathway" id="UPA00053">
    <property type="reaction ID" value="UER00085"/>
</dbReference>
<dbReference type="Proteomes" id="UP000001932">
    <property type="component" value="Chromosome"/>
</dbReference>
<dbReference type="GO" id="GO:0005737">
    <property type="term" value="C:cytoplasm"/>
    <property type="evidence" value="ECO:0007669"/>
    <property type="project" value="UniProtKB-SubCell"/>
</dbReference>
<dbReference type="GO" id="GO:0003856">
    <property type="term" value="F:3-dehydroquinate synthase activity"/>
    <property type="evidence" value="ECO:0007669"/>
    <property type="project" value="UniProtKB-UniRule"/>
</dbReference>
<dbReference type="GO" id="GO:0046872">
    <property type="term" value="F:metal ion binding"/>
    <property type="evidence" value="ECO:0007669"/>
    <property type="project" value="UniProtKB-KW"/>
</dbReference>
<dbReference type="GO" id="GO:0000166">
    <property type="term" value="F:nucleotide binding"/>
    <property type="evidence" value="ECO:0007669"/>
    <property type="project" value="UniProtKB-KW"/>
</dbReference>
<dbReference type="GO" id="GO:0008652">
    <property type="term" value="P:amino acid biosynthetic process"/>
    <property type="evidence" value="ECO:0007669"/>
    <property type="project" value="UniProtKB-KW"/>
</dbReference>
<dbReference type="GO" id="GO:0009073">
    <property type="term" value="P:aromatic amino acid family biosynthetic process"/>
    <property type="evidence" value="ECO:0007669"/>
    <property type="project" value="UniProtKB-KW"/>
</dbReference>
<dbReference type="GO" id="GO:0009423">
    <property type="term" value="P:chorismate biosynthetic process"/>
    <property type="evidence" value="ECO:0007669"/>
    <property type="project" value="UniProtKB-UniRule"/>
</dbReference>
<dbReference type="CDD" id="cd08195">
    <property type="entry name" value="DHQS"/>
    <property type="match status" value="1"/>
</dbReference>
<dbReference type="FunFam" id="1.20.1090.10:FF:000002">
    <property type="entry name" value="3-dehydroquinate synthase"/>
    <property type="match status" value="1"/>
</dbReference>
<dbReference type="FunFam" id="3.40.50.1970:FF:000001">
    <property type="entry name" value="3-dehydroquinate synthase"/>
    <property type="match status" value="1"/>
</dbReference>
<dbReference type="Gene3D" id="3.40.50.1970">
    <property type="match status" value="1"/>
</dbReference>
<dbReference type="Gene3D" id="1.20.1090.10">
    <property type="entry name" value="Dehydroquinate synthase-like - alpha domain"/>
    <property type="match status" value="1"/>
</dbReference>
<dbReference type="HAMAP" id="MF_00110">
    <property type="entry name" value="DHQ_synthase"/>
    <property type="match status" value="1"/>
</dbReference>
<dbReference type="InterPro" id="IPR050071">
    <property type="entry name" value="Dehydroquinate_synthase"/>
</dbReference>
<dbReference type="InterPro" id="IPR016037">
    <property type="entry name" value="DHQ_synth_AroB"/>
</dbReference>
<dbReference type="InterPro" id="IPR030963">
    <property type="entry name" value="DHQ_synth_fam"/>
</dbReference>
<dbReference type="InterPro" id="IPR030960">
    <property type="entry name" value="DHQS/DOIS_N"/>
</dbReference>
<dbReference type="InterPro" id="IPR056179">
    <property type="entry name" value="DHQS_C"/>
</dbReference>
<dbReference type="NCBIfam" id="TIGR01357">
    <property type="entry name" value="aroB"/>
    <property type="match status" value="1"/>
</dbReference>
<dbReference type="PANTHER" id="PTHR43622">
    <property type="entry name" value="3-DEHYDROQUINATE SYNTHASE"/>
    <property type="match status" value="1"/>
</dbReference>
<dbReference type="PANTHER" id="PTHR43622:SF7">
    <property type="entry name" value="3-DEHYDROQUINATE SYNTHASE, CHLOROPLASTIC"/>
    <property type="match status" value="1"/>
</dbReference>
<dbReference type="Pfam" id="PF01761">
    <property type="entry name" value="DHQ_synthase"/>
    <property type="match status" value="1"/>
</dbReference>
<dbReference type="Pfam" id="PF24621">
    <property type="entry name" value="DHQS_C"/>
    <property type="match status" value="1"/>
</dbReference>
<dbReference type="PIRSF" id="PIRSF001455">
    <property type="entry name" value="DHQ_synth"/>
    <property type="match status" value="1"/>
</dbReference>
<dbReference type="SUPFAM" id="SSF56796">
    <property type="entry name" value="Dehydroquinate synthase-like"/>
    <property type="match status" value="1"/>
</dbReference>
<evidence type="ECO:0000255" key="1">
    <source>
        <dbReference type="HAMAP-Rule" id="MF_00110"/>
    </source>
</evidence>
<feature type="chain" id="PRO_1000094624" description="3-dehydroquinate synthase">
    <location>
        <begin position="1"/>
        <end position="361"/>
    </location>
</feature>
<feature type="binding site" evidence="1">
    <location>
        <begin position="71"/>
        <end position="76"/>
    </location>
    <ligand>
        <name>NAD(+)</name>
        <dbReference type="ChEBI" id="CHEBI:57540"/>
    </ligand>
</feature>
<feature type="binding site" evidence="1">
    <location>
        <begin position="105"/>
        <end position="109"/>
    </location>
    <ligand>
        <name>NAD(+)</name>
        <dbReference type="ChEBI" id="CHEBI:57540"/>
    </ligand>
</feature>
<feature type="binding site" evidence="1">
    <location>
        <begin position="129"/>
        <end position="130"/>
    </location>
    <ligand>
        <name>NAD(+)</name>
        <dbReference type="ChEBI" id="CHEBI:57540"/>
    </ligand>
</feature>
<feature type="binding site" evidence="1">
    <location>
        <position position="142"/>
    </location>
    <ligand>
        <name>NAD(+)</name>
        <dbReference type="ChEBI" id="CHEBI:57540"/>
    </ligand>
</feature>
<feature type="binding site" evidence="1">
    <location>
        <position position="151"/>
    </location>
    <ligand>
        <name>NAD(+)</name>
        <dbReference type="ChEBI" id="CHEBI:57540"/>
    </ligand>
</feature>
<feature type="binding site" evidence="1">
    <location>
        <begin position="169"/>
        <end position="172"/>
    </location>
    <ligand>
        <name>NAD(+)</name>
        <dbReference type="ChEBI" id="CHEBI:57540"/>
    </ligand>
</feature>
<feature type="binding site" evidence="1">
    <location>
        <position position="184"/>
    </location>
    <ligand>
        <name>Zn(2+)</name>
        <dbReference type="ChEBI" id="CHEBI:29105"/>
    </ligand>
</feature>
<feature type="binding site" evidence="1">
    <location>
        <position position="247"/>
    </location>
    <ligand>
        <name>Zn(2+)</name>
        <dbReference type="ChEBI" id="CHEBI:29105"/>
    </ligand>
</feature>
<feature type="binding site" evidence="1">
    <location>
        <position position="264"/>
    </location>
    <ligand>
        <name>Zn(2+)</name>
        <dbReference type="ChEBI" id="CHEBI:29105"/>
    </ligand>
</feature>
<reference key="1">
    <citation type="journal article" date="2006" name="Genome Res.">
        <title>Massive genome erosion and functional adaptations provide insights into the symbiotic lifestyle of Sodalis glossinidius in the tsetse host.</title>
        <authorList>
            <person name="Toh H."/>
            <person name="Weiss B.L."/>
            <person name="Perkin S.A.H."/>
            <person name="Yamashita A."/>
            <person name="Oshima K."/>
            <person name="Hattori M."/>
            <person name="Aksoy S."/>
        </authorList>
    </citation>
    <scope>NUCLEOTIDE SEQUENCE [LARGE SCALE GENOMIC DNA]</scope>
    <source>
        <strain>morsitans</strain>
    </source>
</reference>
<keyword id="KW-0028">Amino-acid biosynthesis</keyword>
<keyword id="KW-0057">Aromatic amino acid biosynthesis</keyword>
<keyword id="KW-0170">Cobalt</keyword>
<keyword id="KW-0963">Cytoplasm</keyword>
<keyword id="KW-0456">Lyase</keyword>
<keyword id="KW-0479">Metal-binding</keyword>
<keyword id="KW-0520">NAD</keyword>
<keyword id="KW-0547">Nucleotide-binding</keyword>
<keyword id="KW-0862">Zinc</keyword>
<gene>
    <name evidence="1" type="primary">aroB</name>
    <name type="ordered locus">SG2308</name>
</gene>
<organism>
    <name type="scientific">Sodalis glossinidius (strain morsitans)</name>
    <dbReference type="NCBI Taxonomy" id="343509"/>
    <lineage>
        <taxon>Bacteria</taxon>
        <taxon>Pseudomonadati</taxon>
        <taxon>Pseudomonadota</taxon>
        <taxon>Gammaproteobacteria</taxon>
        <taxon>Enterobacterales</taxon>
        <taxon>Bruguierivoracaceae</taxon>
        <taxon>Sodalis</taxon>
    </lineage>
</organism>
<protein>
    <recommendedName>
        <fullName evidence="1">3-dehydroquinate synthase</fullName>
        <shortName evidence="1">DHQS</shortName>
        <ecNumber evidence="1">4.2.3.4</ecNumber>
    </recommendedName>
</protein>
<name>AROB_SODGM</name>